<comment type="function">
    <text evidence="1">Together with its co-chaperonin GroES, plays an essential role in assisting protein folding. The GroEL-GroES system forms a nano-cage that allows encapsulation of the non-native substrate proteins and provides a physical environment optimized to promote and accelerate protein folding.</text>
</comment>
<comment type="catalytic activity">
    <reaction evidence="1">
        <text>ATP + H2O + a folded polypeptide = ADP + phosphate + an unfolded polypeptide.</text>
        <dbReference type="EC" id="5.6.1.7"/>
    </reaction>
</comment>
<comment type="subunit">
    <text evidence="1">Forms a cylinder of 14 subunits composed of two heptameric rings stacked back-to-back. Interacts with the co-chaperonin GroES.</text>
</comment>
<comment type="subcellular location">
    <subcellularLocation>
        <location evidence="1">Cytoplasm</location>
    </subcellularLocation>
</comment>
<comment type="similarity">
    <text evidence="1">Belongs to the chaperonin (HSP60) family.</text>
</comment>
<feature type="chain" id="PRO_0000331961" description="Chaperonin GroEL 1">
    <location>
        <begin position="1"/>
        <end position="539"/>
    </location>
</feature>
<feature type="binding site" evidence="1">
    <location>
        <begin position="29"/>
        <end position="32"/>
    </location>
    <ligand>
        <name>ATP</name>
        <dbReference type="ChEBI" id="CHEBI:30616"/>
    </ligand>
</feature>
<feature type="binding site" evidence="1">
    <location>
        <begin position="86"/>
        <end position="90"/>
    </location>
    <ligand>
        <name>ATP</name>
        <dbReference type="ChEBI" id="CHEBI:30616"/>
    </ligand>
</feature>
<feature type="binding site" evidence="1">
    <location>
        <position position="413"/>
    </location>
    <ligand>
        <name>ATP</name>
        <dbReference type="ChEBI" id="CHEBI:30616"/>
    </ligand>
</feature>
<feature type="binding site" evidence="1">
    <location>
        <position position="493"/>
    </location>
    <ligand>
        <name>ATP</name>
        <dbReference type="ChEBI" id="CHEBI:30616"/>
    </ligand>
</feature>
<gene>
    <name evidence="1" type="primary">groEL1</name>
    <name evidence="1" type="synonym">groL1</name>
    <name type="ordered locus">Acel_0101</name>
</gene>
<evidence type="ECO:0000255" key="1">
    <source>
        <dbReference type="HAMAP-Rule" id="MF_00600"/>
    </source>
</evidence>
<reference key="1">
    <citation type="journal article" date="2009" name="Genome Res.">
        <title>Complete genome of the cellulolytic thermophile Acidothermus cellulolyticus 11B provides insights into its ecophysiological and evolutionary adaptations.</title>
        <authorList>
            <person name="Barabote R.D."/>
            <person name="Xie G."/>
            <person name="Leu D.H."/>
            <person name="Normand P."/>
            <person name="Necsulea A."/>
            <person name="Daubin V."/>
            <person name="Medigue C."/>
            <person name="Adney W.S."/>
            <person name="Xu X.C."/>
            <person name="Lapidus A."/>
            <person name="Parales R.E."/>
            <person name="Detter C."/>
            <person name="Pujic P."/>
            <person name="Bruce D."/>
            <person name="Lavire C."/>
            <person name="Challacombe J.F."/>
            <person name="Brettin T.S."/>
            <person name="Berry A.M."/>
        </authorList>
    </citation>
    <scope>NUCLEOTIDE SEQUENCE [LARGE SCALE GENOMIC DNA]</scope>
    <source>
        <strain>ATCC 43068 / DSM 8971 / 11B</strain>
    </source>
</reference>
<sequence>MAKMIAFDEAARRALERGMNQLADAVKVTLGPKGRNVVLEKKWGAPTITNDGVSIAKEIELEDPYEKIGAELVKEVAKKTDDVAGDGTTTATVLAQTLVREGLRNVAAGANPMALKRGIEAATERVCQALLEIAKDVETREQIASTASISAGDTAVGEMIAEAMDKVGKEGVITVEESNTFGLELELTEGMRFDKGYISPYFVTDSERMEAVLEDPYILIANQKISAVKDLLPVLEKVMQAGKPLAIIAEDVEGEALATLVVNKIRGTFRSVAVKAPGFGDRRKAMLGDIAVLTGGQVISEEVGLKLENVGLDLLGRARKVVVTKDETTIVEGAGDPEQIAGRVNQIRAEIEKTDSDYDREKLQERLAKLAGGVAVIKVGAATEVELKERKHRIEDAVRNAKAAVEEGIVAGGGVALLQAGKTAFEKLDLEGDEATGARIVELALEAPLKQIAINAGLEGGVVVEKVRSLEPGWGLNAQTGEYVDMIKAGIIDPAKVTRSALQNAASIAGLFLTTEAVVAEKPEKEKTPAAPGGGDMDF</sequence>
<organism>
    <name type="scientific">Acidothermus cellulolyticus (strain ATCC 43068 / DSM 8971 / 11B)</name>
    <dbReference type="NCBI Taxonomy" id="351607"/>
    <lineage>
        <taxon>Bacteria</taxon>
        <taxon>Bacillati</taxon>
        <taxon>Actinomycetota</taxon>
        <taxon>Actinomycetes</taxon>
        <taxon>Acidothermales</taxon>
        <taxon>Acidothermaceae</taxon>
        <taxon>Acidothermus</taxon>
    </lineage>
</organism>
<protein>
    <recommendedName>
        <fullName evidence="1">Chaperonin GroEL 1</fullName>
        <ecNumber evidence="1">5.6.1.7</ecNumber>
    </recommendedName>
    <alternativeName>
        <fullName evidence="1">60 kDa chaperonin 1</fullName>
    </alternativeName>
    <alternativeName>
        <fullName evidence="1">Chaperonin-60 1</fullName>
        <shortName evidence="1">Cpn60 1</shortName>
    </alternativeName>
</protein>
<proteinExistence type="inferred from homology"/>
<name>CH601_ACIC1</name>
<accession>A0LR17</accession>
<dbReference type="EC" id="5.6.1.7" evidence="1"/>
<dbReference type="EMBL" id="CP000481">
    <property type="protein sequence ID" value="ABK51877.1"/>
    <property type="molecule type" value="Genomic_DNA"/>
</dbReference>
<dbReference type="RefSeq" id="WP_011718941.1">
    <property type="nucleotide sequence ID" value="NC_008578.1"/>
</dbReference>
<dbReference type="SMR" id="A0LR17"/>
<dbReference type="FunCoup" id="A0LR17">
    <property type="interactions" value="315"/>
</dbReference>
<dbReference type="STRING" id="351607.Acel_0101"/>
<dbReference type="KEGG" id="ace:Acel_0101"/>
<dbReference type="eggNOG" id="COG0459">
    <property type="taxonomic scope" value="Bacteria"/>
</dbReference>
<dbReference type="HOGENOM" id="CLU_016503_3_0_11"/>
<dbReference type="InParanoid" id="A0LR17"/>
<dbReference type="OrthoDB" id="9766614at2"/>
<dbReference type="Proteomes" id="UP000008221">
    <property type="component" value="Chromosome"/>
</dbReference>
<dbReference type="GO" id="GO:0005737">
    <property type="term" value="C:cytoplasm"/>
    <property type="evidence" value="ECO:0007669"/>
    <property type="project" value="UniProtKB-SubCell"/>
</dbReference>
<dbReference type="GO" id="GO:0005524">
    <property type="term" value="F:ATP binding"/>
    <property type="evidence" value="ECO:0007669"/>
    <property type="project" value="UniProtKB-UniRule"/>
</dbReference>
<dbReference type="GO" id="GO:0140662">
    <property type="term" value="F:ATP-dependent protein folding chaperone"/>
    <property type="evidence" value="ECO:0007669"/>
    <property type="project" value="InterPro"/>
</dbReference>
<dbReference type="GO" id="GO:0016853">
    <property type="term" value="F:isomerase activity"/>
    <property type="evidence" value="ECO:0007669"/>
    <property type="project" value="UniProtKB-KW"/>
</dbReference>
<dbReference type="GO" id="GO:0051082">
    <property type="term" value="F:unfolded protein binding"/>
    <property type="evidence" value="ECO:0007669"/>
    <property type="project" value="UniProtKB-UniRule"/>
</dbReference>
<dbReference type="GO" id="GO:0042026">
    <property type="term" value="P:protein refolding"/>
    <property type="evidence" value="ECO:0007669"/>
    <property type="project" value="UniProtKB-UniRule"/>
</dbReference>
<dbReference type="CDD" id="cd03344">
    <property type="entry name" value="GroEL"/>
    <property type="match status" value="1"/>
</dbReference>
<dbReference type="FunFam" id="3.50.7.10:FF:000001">
    <property type="entry name" value="60 kDa chaperonin"/>
    <property type="match status" value="1"/>
</dbReference>
<dbReference type="Gene3D" id="3.50.7.10">
    <property type="entry name" value="GroEL"/>
    <property type="match status" value="1"/>
</dbReference>
<dbReference type="Gene3D" id="1.10.560.10">
    <property type="entry name" value="GroEL-like equatorial domain"/>
    <property type="match status" value="1"/>
</dbReference>
<dbReference type="Gene3D" id="3.30.260.10">
    <property type="entry name" value="TCP-1-like chaperonin intermediate domain"/>
    <property type="match status" value="1"/>
</dbReference>
<dbReference type="HAMAP" id="MF_00600">
    <property type="entry name" value="CH60"/>
    <property type="match status" value="1"/>
</dbReference>
<dbReference type="InterPro" id="IPR018370">
    <property type="entry name" value="Chaperonin_Cpn60_CS"/>
</dbReference>
<dbReference type="InterPro" id="IPR001844">
    <property type="entry name" value="Cpn60/GroEL"/>
</dbReference>
<dbReference type="InterPro" id="IPR002423">
    <property type="entry name" value="Cpn60/GroEL/TCP-1"/>
</dbReference>
<dbReference type="InterPro" id="IPR027409">
    <property type="entry name" value="GroEL-like_apical_dom_sf"/>
</dbReference>
<dbReference type="InterPro" id="IPR027413">
    <property type="entry name" value="GROEL-like_equatorial_sf"/>
</dbReference>
<dbReference type="InterPro" id="IPR027410">
    <property type="entry name" value="TCP-1-like_intermed_sf"/>
</dbReference>
<dbReference type="NCBIfam" id="TIGR02348">
    <property type="entry name" value="GroEL"/>
    <property type="match status" value="1"/>
</dbReference>
<dbReference type="NCBIfam" id="NF000592">
    <property type="entry name" value="PRK00013.1"/>
    <property type="match status" value="1"/>
</dbReference>
<dbReference type="NCBIfam" id="NF009487">
    <property type="entry name" value="PRK12849.1"/>
    <property type="match status" value="1"/>
</dbReference>
<dbReference type="NCBIfam" id="NF009488">
    <property type="entry name" value="PRK12850.1"/>
    <property type="match status" value="1"/>
</dbReference>
<dbReference type="NCBIfam" id="NF009489">
    <property type="entry name" value="PRK12851.1"/>
    <property type="match status" value="1"/>
</dbReference>
<dbReference type="PANTHER" id="PTHR45633">
    <property type="entry name" value="60 KDA HEAT SHOCK PROTEIN, MITOCHONDRIAL"/>
    <property type="match status" value="1"/>
</dbReference>
<dbReference type="Pfam" id="PF00118">
    <property type="entry name" value="Cpn60_TCP1"/>
    <property type="match status" value="1"/>
</dbReference>
<dbReference type="PRINTS" id="PR00298">
    <property type="entry name" value="CHAPERONIN60"/>
</dbReference>
<dbReference type="SUPFAM" id="SSF52029">
    <property type="entry name" value="GroEL apical domain-like"/>
    <property type="match status" value="1"/>
</dbReference>
<dbReference type="SUPFAM" id="SSF48592">
    <property type="entry name" value="GroEL equatorial domain-like"/>
    <property type="match status" value="1"/>
</dbReference>
<dbReference type="SUPFAM" id="SSF54849">
    <property type="entry name" value="GroEL-intermediate domain like"/>
    <property type="match status" value="1"/>
</dbReference>
<dbReference type="PROSITE" id="PS00296">
    <property type="entry name" value="CHAPERONINS_CPN60"/>
    <property type="match status" value="1"/>
</dbReference>
<keyword id="KW-0067">ATP-binding</keyword>
<keyword id="KW-0143">Chaperone</keyword>
<keyword id="KW-0963">Cytoplasm</keyword>
<keyword id="KW-0413">Isomerase</keyword>
<keyword id="KW-0547">Nucleotide-binding</keyword>
<keyword id="KW-1185">Reference proteome</keyword>